<keyword id="KW-0028">Amino-acid biosynthesis</keyword>
<keyword id="KW-1003">Cell membrane</keyword>
<keyword id="KW-0963">Cytoplasm</keyword>
<keyword id="KW-0223">Dioxygenase</keyword>
<keyword id="KW-0408">Iron</keyword>
<keyword id="KW-0472">Membrane</keyword>
<keyword id="KW-0479">Metal-binding</keyword>
<keyword id="KW-0486">Methionine biosynthesis</keyword>
<keyword id="KW-0533">Nickel</keyword>
<keyword id="KW-0539">Nucleus</keyword>
<keyword id="KW-0560">Oxidoreductase</keyword>
<keyword id="KW-1185">Reference proteome</keyword>
<reference key="1">
    <citation type="submission" date="2005-10" db="EMBL/GenBank/DDBJ databases">
        <authorList>
            <consortium name="NIH - Xenopus Gene Collection (XGC) project"/>
        </authorList>
    </citation>
    <scope>NUCLEOTIDE SEQUENCE [LARGE SCALE MRNA]</scope>
    <source>
        <tissue>Testis</tissue>
    </source>
</reference>
<evidence type="ECO:0000255" key="1">
    <source>
        <dbReference type="HAMAP-Rule" id="MF_03154"/>
    </source>
</evidence>
<comment type="function">
    <text evidence="1">Catalyzes 2 different reactions between oxygen and the acireductone 1,2-dihydroxy-3-keto-5-methylthiopentene (DHK-MTPene) depending upon the metal bound in the active site. Fe-containing acireductone dioxygenase (Fe-ARD) produces formate and 2-keto-4-methylthiobutyrate (KMTB), the alpha-ketoacid precursor of methionine in the methionine recycle pathway. Ni-containing acireductone dioxygenase (Ni-ARD) produces methylthiopropionate, carbon monoxide and formate, and does not lie on the methionine recycle pathway.</text>
</comment>
<comment type="catalytic activity">
    <reaction evidence="1">
        <text>1,2-dihydroxy-5-(methylsulfanyl)pent-1-en-3-one + O2 = 4-methylsulfanyl-2-oxobutanoate + formate + 2 H(+)</text>
        <dbReference type="Rhea" id="RHEA:24504"/>
        <dbReference type="ChEBI" id="CHEBI:15378"/>
        <dbReference type="ChEBI" id="CHEBI:15379"/>
        <dbReference type="ChEBI" id="CHEBI:15740"/>
        <dbReference type="ChEBI" id="CHEBI:16723"/>
        <dbReference type="ChEBI" id="CHEBI:49252"/>
        <dbReference type="EC" id="1.13.11.54"/>
    </reaction>
</comment>
<comment type="catalytic activity">
    <reaction evidence="1">
        <text>1,2-dihydroxy-5-(methylsulfanyl)pent-1-en-3-one + O2 = 3-(methylsulfanyl)propanoate + CO + formate + 2 H(+)</text>
        <dbReference type="Rhea" id="RHEA:14161"/>
        <dbReference type="ChEBI" id="CHEBI:15378"/>
        <dbReference type="ChEBI" id="CHEBI:15379"/>
        <dbReference type="ChEBI" id="CHEBI:15740"/>
        <dbReference type="ChEBI" id="CHEBI:17245"/>
        <dbReference type="ChEBI" id="CHEBI:49016"/>
        <dbReference type="ChEBI" id="CHEBI:49252"/>
        <dbReference type="EC" id="1.13.11.53"/>
    </reaction>
</comment>
<comment type="cofactor">
    <cofactor evidence="1">
        <name>Fe(2+)</name>
        <dbReference type="ChEBI" id="CHEBI:29033"/>
    </cofactor>
    <cofactor evidence="1">
        <name>Ni(2+)</name>
        <dbReference type="ChEBI" id="CHEBI:49786"/>
    </cofactor>
    <text evidence="1">Binds either 1 Fe or Ni cation per monomer. Iron-binding promotes an acireductone dioxygenase reaction producing 2-keto-4-methylthiobutyrate, while nickel-binding promotes an acireductone dioxygenase reaction producing 3-(methylsulfanyl)propanoate.</text>
</comment>
<comment type="pathway">
    <text evidence="1">Amino-acid biosynthesis; L-methionine biosynthesis via salvage pathway; L-methionine from S-methyl-5-thio-alpha-D-ribose 1-phosphate: step 5/6.</text>
</comment>
<comment type="subunit">
    <text evidence="1">Monomer. Interacts with MMP14.</text>
</comment>
<comment type="subcellular location">
    <subcellularLocation>
        <location evidence="1">Cytoplasm</location>
    </subcellularLocation>
    <subcellularLocation>
        <location evidence="1">Nucleus</location>
    </subcellularLocation>
    <subcellularLocation>
        <location evidence="1">Cell membrane</location>
        <topology evidence="1">Peripheral membrane protein</topology>
        <orientation evidence="1">Cytoplasmic side</orientation>
    </subcellularLocation>
    <text evidence="1">Localizes to the plasma membrane when complexed to MMP14.</text>
</comment>
<comment type="similarity">
    <text evidence="1">Belongs to the acireductone dioxygenase (ARD) family.</text>
</comment>
<name>MTND_XENLA</name>
<dbReference type="EC" id="1.13.11.54" evidence="1"/>
<dbReference type="EC" id="1.13.11.53" evidence="1"/>
<dbReference type="EMBL" id="BC106582">
    <property type="protein sequence ID" value="AAI06583.1"/>
    <property type="molecule type" value="mRNA"/>
</dbReference>
<dbReference type="RefSeq" id="NP_001089795.1">
    <property type="nucleotide sequence ID" value="NM_001096326.1"/>
</dbReference>
<dbReference type="SMR" id="Q3B8C8"/>
<dbReference type="DNASU" id="734860"/>
<dbReference type="GeneID" id="734860"/>
<dbReference type="KEGG" id="xla:734860"/>
<dbReference type="AGR" id="Xenbase:XB-GENE-6255001"/>
<dbReference type="CTD" id="734860"/>
<dbReference type="Xenbase" id="XB-GENE-6255001">
    <property type="gene designation" value="adi1.L"/>
</dbReference>
<dbReference type="OMA" id="WYMDESQ"/>
<dbReference type="OrthoDB" id="1867259at2759"/>
<dbReference type="UniPathway" id="UPA00904">
    <property type="reaction ID" value="UER00878"/>
</dbReference>
<dbReference type="Proteomes" id="UP000186698">
    <property type="component" value="Chromosome 5L"/>
</dbReference>
<dbReference type="Bgee" id="734860">
    <property type="expression patterns" value="Expressed in pancreas and 18 other cell types or tissues"/>
</dbReference>
<dbReference type="GO" id="GO:0005737">
    <property type="term" value="C:cytoplasm"/>
    <property type="evidence" value="ECO:0000250"/>
    <property type="project" value="UniProtKB"/>
</dbReference>
<dbReference type="GO" id="GO:0005634">
    <property type="term" value="C:nucleus"/>
    <property type="evidence" value="ECO:0000250"/>
    <property type="project" value="UniProtKB"/>
</dbReference>
<dbReference type="GO" id="GO:0005886">
    <property type="term" value="C:plasma membrane"/>
    <property type="evidence" value="ECO:0000250"/>
    <property type="project" value="UniProtKB"/>
</dbReference>
<dbReference type="GO" id="GO:0010308">
    <property type="term" value="F:acireductone dioxygenase (Ni2+-requiring) activity"/>
    <property type="evidence" value="ECO:0007669"/>
    <property type="project" value="UniProtKB-UniRule"/>
</dbReference>
<dbReference type="GO" id="GO:0010309">
    <property type="term" value="F:acireductone dioxygenase [iron(II)-requiring] activity"/>
    <property type="evidence" value="ECO:0000318"/>
    <property type="project" value="GO_Central"/>
</dbReference>
<dbReference type="GO" id="GO:0005506">
    <property type="term" value="F:iron ion binding"/>
    <property type="evidence" value="ECO:0007669"/>
    <property type="project" value="UniProtKB-UniRule"/>
</dbReference>
<dbReference type="GO" id="GO:0016151">
    <property type="term" value="F:nickel cation binding"/>
    <property type="evidence" value="ECO:0007669"/>
    <property type="project" value="UniProtKB-UniRule"/>
</dbReference>
<dbReference type="GO" id="GO:0016491">
    <property type="term" value="F:oxidoreductase activity"/>
    <property type="evidence" value="ECO:0000250"/>
    <property type="project" value="UniProtKB"/>
</dbReference>
<dbReference type="GO" id="GO:0019509">
    <property type="term" value="P:L-methionine salvage from methylthioadenosine"/>
    <property type="evidence" value="ECO:0000250"/>
    <property type="project" value="UniProtKB"/>
</dbReference>
<dbReference type="GO" id="GO:0006555">
    <property type="term" value="P:methionine metabolic process"/>
    <property type="evidence" value="ECO:0000318"/>
    <property type="project" value="GO_Central"/>
</dbReference>
<dbReference type="CDD" id="cd02232">
    <property type="entry name" value="cupin_ARD"/>
    <property type="match status" value="1"/>
</dbReference>
<dbReference type="FunFam" id="2.60.120.10:FF:000031">
    <property type="entry name" value="1,2-dihydroxy-3-keto-5-methylthiopentene dioxygenase"/>
    <property type="match status" value="1"/>
</dbReference>
<dbReference type="Gene3D" id="2.60.120.10">
    <property type="entry name" value="Jelly Rolls"/>
    <property type="match status" value="1"/>
</dbReference>
<dbReference type="HAMAP" id="MF_03154">
    <property type="entry name" value="Salvage_MtnD_euk"/>
    <property type="match status" value="1"/>
</dbReference>
<dbReference type="InterPro" id="IPR004313">
    <property type="entry name" value="ARD"/>
</dbReference>
<dbReference type="InterPro" id="IPR027496">
    <property type="entry name" value="ARD_euk"/>
</dbReference>
<dbReference type="InterPro" id="IPR014710">
    <property type="entry name" value="RmlC-like_jellyroll"/>
</dbReference>
<dbReference type="InterPro" id="IPR011051">
    <property type="entry name" value="RmlC_Cupin_sf"/>
</dbReference>
<dbReference type="PANTHER" id="PTHR23418">
    <property type="entry name" value="ACIREDUCTONE DIOXYGENASE"/>
    <property type="match status" value="1"/>
</dbReference>
<dbReference type="PANTHER" id="PTHR23418:SF0">
    <property type="entry name" value="ACIREDUCTONE DIOXYGENASE"/>
    <property type="match status" value="1"/>
</dbReference>
<dbReference type="Pfam" id="PF03079">
    <property type="entry name" value="ARD"/>
    <property type="match status" value="1"/>
</dbReference>
<dbReference type="SUPFAM" id="SSF51182">
    <property type="entry name" value="RmlC-like cupins"/>
    <property type="match status" value="1"/>
</dbReference>
<protein>
    <recommendedName>
        <fullName evidence="1">Acireductone dioxygenase</fullName>
    </recommendedName>
    <alternativeName>
        <fullName evidence="1">Acireductone dioxygenase (Fe(2+)-requiring)</fullName>
        <shortName evidence="1">ARD'</shortName>
        <shortName evidence="1">Fe-ARD</shortName>
        <ecNumber evidence="1">1.13.11.54</ecNumber>
    </alternativeName>
    <alternativeName>
        <fullName evidence="1">Acireductone dioxygenase (Ni(2+)-requiring)</fullName>
        <shortName evidence="1">ARD</shortName>
        <shortName evidence="1">Ni-ARD</shortName>
        <ecNumber evidence="1">1.13.11.53</ecNumber>
    </alternativeName>
    <alternativeName>
        <fullName evidence="1">Membrane-type 1 matrix metalloproteinase cytoplasmic tail-binding protein 1</fullName>
        <shortName evidence="1">MTCBP-1</shortName>
    </alternativeName>
</protein>
<gene>
    <name type="primary">adi1</name>
    <name type="synonym">mtcbp1</name>
</gene>
<accession>Q3B8C8</accession>
<feature type="chain" id="PRO_0000223189" description="Acireductone dioxygenase">
    <location>
        <begin position="1"/>
        <end position="179"/>
    </location>
</feature>
<feature type="binding site" evidence="1">
    <location>
        <position position="88"/>
    </location>
    <ligand>
        <name>Fe(2+)</name>
        <dbReference type="ChEBI" id="CHEBI:29033"/>
        <note>for iron-dependent acireductone dioxygenase activity</note>
    </ligand>
</feature>
<feature type="binding site" evidence="1">
    <location>
        <position position="88"/>
    </location>
    <ligand>
        <name>Ni(2+)</name>
        <dbReference type="ChEBI" id="CHEBI:49786"/>
        <note>for nickel-dependent acireductone dioxygenase activity</note>
    </ligand>
</feature>
<feature type="binding site" evidence="1">
    <location>
        <position position="90"/>
    </location>
    <ligand>
        <name>Fe(2+)</name>
        <dbReference type="ChEBI" id="CHEBI:29033"/>
        <note>for iron-dependent acireductone dioxygenase activity</note>
    </ligand>
</feature>
<feature type="binding site" evidence="1">
    <location>
        <position position="90"/>
    </location>
    <ligand>
        <name>Ni(2+)</name>
        <dbReference type="ChEBI" id="CHEBI:49786"/>
        <note>for nickel-dependent acireductone dioxygenase activity</note>
    </ligand>
</feature>
<feature type="binding site" evidence="1">
    <location>
        <position position="94"/>
    </location>
    <ligand>
        <name>Fe(2+)</name>
        <dbReference type="ChEBI" id="CHEBI:29033"/>
        <note>for iron-dependent acireductone dioxygenase activity</note>
    </ligand>
</feature>
<feature type="binding site" evidence="1">
    <location>
        <position position="94"/>
    </location>
    <ligand>
        <name>Ni(2+)</name>
        <dbReference type="ChEBI" id="CHEBI:49786"/>
        <note>for nickel-dependent acireductone dioxygenase activity</note>
    </ligand>
</feature>
<feature type="binding site" evidence="1">
    <location>
        <position position="133"/>
    </location>
    <ligand>
        <name>Fe(2+)</name>
        <dbReference type="ChEBI" id="CHEBI:29033"/>
        <note>for iron-dependent acireductone dioxygenase activity</note>
    </ligand>
</feature>
<feature type="binding site" evidence="1">
    <location>
        <position position="133"/>
    </location>
    <ligand>
        <name>Ni(2+)</name>
        <dbReference type="ChEBI" id="CHEBI:49786"/>
        <note>for nickel-dependent acireductone dioxygenase activity</note>
    </ligand>
</feature>
<proteinExistence type="evidence at transcript level"/>
<sequence length="179" mass="21300">MVQAWYMDDSAEDQRKPHRLQQDVPVSLEQLKALGVDSLSLDADRYESDPELAKIRKENNYTWMDIITIHKDTMPNYEEKLKIFYEEHLHLDDEIRYILEGSGYFDVRDQKDKWIRIFMQKGDMITLPAGIYHRFTLDENNYVKAMRLFVGDPVWTPFNRPADNCEAREKYVQFLAQTA</sequence>
<organism>
    <name type="scientific">Xenopus laevis</name>
    <name type="common">African clawed frog</name>
    <dbReference type="NCBI Taxonomy" id="8355"/>
    <lineage>
        <taxon>Eukaryota</taxon>
        <taxon>Metazoa</taxon>
        <taxon>Chordata</taxon>
        <taxon>Craniata</taxon>
        <taxon>Vertebrata</taxon>
        <taxon>Euteleostomi</taxon>
        <taxon>Amphibia</taxon>
        <taxon>Batrachia</taxon>
        <taxon>Anura</taxon>
        <taxon>Pipoidea</taxon>
        <taxon>Pipidae</taxon>
        <taxon>Xenopodinae</taxon>
        <taxon>Xenopus</taxon>
        <taxon>Xenopus</taxon>
    </lineage>
</organism>